<comment type="function">
    <text evidence="2">With S4 and S5 plays an important role in translational accuracy.</text>
</comment>
<comment type="function">
    <text evidence="2">Interacts with and stabilizes bases of the 16S rRNA that are involved in tRNA selection in the A site and with the mRNA backbone. Located at the interface of the 30S and 50S subunits, it traverses the body of the 30S subunit contacting proteins on the other side and probably holding the rRNA structure together. The combined cluster of proteins S8, S12 and S17 appears to hold together the shoulder and platform of the 30S subunit.</text>
</comment>
<comment type="subunit">
    <text evidence="2">Part of the 30S ribosomal subunit. Contacts proteins S8 and S17. May interact with IF1 in the 30S initiation complex.</text>
</comment>
<comment type="similarity">
    <text evidence="2">Belongs to the universal ribosomal protein uS12 family.</text>
</comment>
<gene>
    <name evidence="2" type="primary">rpsL</name>
    <name type="ordered locus">EAT1b_1639</name>
</gene>
<organism>
    <name type="scientific">Exiguobacterium sp. (strain ATCC BAA-1283 / AT1b)</name>
    <dbReference type="NCBI Taxonomy" id="360911"/>
    <lineage>
        <taxon>Bacteria</taxon>
        <taxon>Bacillati</taxon>
        <taxon>Bacillota</taxon>
        <taxon>Bacilli</taxon>
        <taxon>Bacillales</taxon>
        <taxon>Bacillales Family XII. Incertae Sedis</taxon>
        <taxon>Exiguobacterium</taxon>
    </lineage>
</organism>
<reference key="1">
    <citation type="journal article" date="2011" name="J. Bacteriol.">
        <title>Complete genome sequence of the Thermophilic Bacterium Exiguobacterium sp. AT1b.</title>
        <authorList>
            <person name="Vishnivetskaya T.A."/>
            <person name="Lucas S."/>
            <person name="Copeland A."/>
            <person name="Lapidus A."/>
            <person name="Glavina del Rio T."/>
            <person name="Dalin E."/>
            <person name="Tice H."/>
            <person name="Bruce D.C."/>
            <person name="Goodwin L.A."/>
            <person name="Pitluck S."/>
            <person name="Saunders E."/>
            <person name="Brettin T."/>
            <person name="Detter C."/>
            <person name="Han C."/>
            <person name="Larimer F."/>
            <person name="Land M.L."/>
            <person name="Hauser L.J."/>
            <person name="Kyrpides N.C."/>
            <person name="Ovchinnikova G."/>
            <person name="Kathariou S."/>
            <person name="Ramaley R.F."/>
            <person name="Rodrigues D.F."/>
            <person name="Hendrix C."/>
            <person name="Richardson P."/>
            <person name="Tiedje J.M."/>
        </authorList>
    </citation>
    <scope>NUCLEOTIDE SEQUENCE [LARGE SCALE GENOMIC DNA]</scope>
    <source>
        <strain>ATCC BAA-1283 / AT1b</strain>
    </source>
</reference>
<feature type="chain" id="PRO_1000205914" description="Small ribosomal subunit protein uS12">
    <location>
        <begin position="1"/>
        <end position="140"/>
    </location>
</feature>
<feature type="region of interest" description="Disordered" evidence="3">
    <location>
        <begin position="1"/>
        <end position="20"/>
    </location>
</feature>
<feature type="region of interest" description="Disordered" evidence="3">
    <location>
        <begin position="35"/>
        <end position="55"/>
    </location>
</feature>
<feature type="region of interest" description="Disordered" evidence="3">
    <location>
        <begin position="121"/>
        <end position="140"/>
    </location>
</feature>
<feature type="compositionally biased region" description="Basic residues" evidence="3">
    <location>
        <begin position="130"/>
        <end position="140"/>
    </location>
</feature>
<feature type="modified residue" description="3-methylthioaspartic acid" evidence="1">
    <location>
        <position position="102"/>
    </location>
</feature>
<proteinExistence type="inferred from homology"/>
<name>RS12_EXISA</name>
<dbReference type="EMBL" id="CP001615">
    <property type="protein sequence ID" value="ACQ70565.1"/>
    <property type="molecule type" value="Genomic_DNA"/>
</dbReference>
<dbReference type="RefSeq" id="WP_012727683.1">
    <property type="nucleotide sequence ID" value="NZ_MOEL01000001.1"/>
</dbReference>
<dbReference type="SMR" id="C4KZQ2"/>
<dbReference type="STRING" id="360911.EAT1b_1639"/>
<dbReference type="GeneID" id="94370737"/>
<dbReference type="KEGG" id="eat:EAT1b_1639"/>
<dbReference type="eggNOG" id="COG0048">
    <property type="taxonomic scope" value="Bacteria"/>
</dbReference>
<dbReference type="HOGENOM" id="CLU_104295_1_2_9"/>
<dbReference type="OrthoDB" id="9802366at2"/>
<dbReference type="Proteomes" id="UP000000716">
    <property type="component" value="Chromosome"/>
</dbReference>
<dbReference type="GO" id="GO:0015935">
    <property type="term" value="C:small ribosomal subunit"/>
    <property type="evidence" value="ECO:0007669"/>
    <property type="project" value="InterPro"/>
</dbReference>
<dbReference type="GO" id="GO:0019843">
    <property type="term" value="F:rRNA binding"/>
    <property type="evidence" value="ECO:0007669"/>
    <property type="project" value="UniProtKB-UniRule"/>
</dbReference>
<dbReference type="GO" id="GO:0003735">
    <property type="term" value="F:structural constituent of ribosome"/>
    <property type="evidence" value="ECO:0007669"/>
    <property type="project" value="InterPro"/>
</dbReference>
<dbReference type="GO" id="GO:0000049">
    <property type="term" value="F:tRNA binding"/>
    <property type="evidence" value="ECO:0007669"/>
    <property type="project" value="UniProtKB-UniRule"/>
</dbReference>
<dbReference type="GO" id="GO:0006412">
    <property type="term" value="P:translation"/>
    <property type="evidence" value="ECO:0007669"/>
    <property type="project" value="UniProtKB-UniRule"/>
</dbReference>
<dbReference type="CDD" id="cd03368">
    <property type="entry name" value="Ribosomal_S12"/>
    <property type="match status" value="1"/>
</dbReference>
<dbReference type="FunFam" id="2.40.50.140:FF:000001">
    <property type="entry name" value="30S ribosomal protein S12"/>
    <property type="match status" value="1"/>
</dbReference>
<dbReference type="Gene3D" id="2.40.50.140">
    <property type="entry name" value="Nucleic acid-binding proteins"/>
    <property type="match status" value="1"/>
</dbReference>
<dbReference type="HAMAP" id="MF_00403_B">
    <property type="entry name" value="Ribosomal_uS12_B"/>
    <property type="match status" value="1"/>
</dbReference>
<dbReference type="InterPro" id="IPR012340">
    <property type="entry name" value="NA-bd_OB-fold"/>
</dbReference>
<dbReference type="InterPro" id="IPR006032">
    <property type="entry name" value="Ribosomal_uS12"/>
</dbReference>
<dbReference type="InterPro" id="IPR005679">
    <property type="entry name" value="Ribosomal_uS12_bac"/>
</dbReference>
<dbReference type="NCBIfam" id="TIGR00981">
    <property type="entry name" value="rpsL_bact"/>
    <property type="match status" value="1"/>
</dbReference>
<dbReference type="PANTHER" id="PTHR11652">
    <property type="entry name" value="30S RIBOSOMAL PROTEIN S12 FAMILY MEMBER"/>
    <property type="match status" value="1"/>
</dbReference>
<dbReference type="Pfam" id="PF00164">
    <property type="entry name" value="Ribosom_S12_S23"/>
    <property type="match status" value="1"/>
</dbReference>
<dbReference type="PRINTS" id="PR01034">
    <property type="entry name" value="RIBOSOMALS12"/>
</dbReference>
<dbReference type="SUPFAM" id="SSF50249">
    <property type="entry name" value="Nucleic acid-binding proteins"/>
    <property type="match status" value="1"/>
</dbReference>
<dbReference type="PROSITE" id="PS00055">
    <property type="entry name" value="RIBOSOMAL_S12"/>
    <property type="match status" value="1"/>
</dbReference>
<evidence type="ECO:0000250" key="1"/>
<evidence type="ECO:0000255" key="2">
    <source>
        <dbReference type="HAMAP-Rule" id="MF_00403"/>
    </source>
</evidence>
<evidence type="ECO:0000256" key="3">
    <source>
        <dbReference type="SAM" id="MobiDB-lite"/>
    </source>
</evidence>
<evidence type="ECO:0000305" key="4"/>
<keyword id="KW-0488">Methylation</keyword>
<keyword id="KW-0687">Ribonucleoprotein</keyword>
<keyword id="KW-0689">Ribosomal protein</keyword>
<keyword id="KW-0694">RNA-binding</keyword>
<keyword id="KW-0699">rRNA-binding</keyword>
<keyword id="KW-0820">tRNA-binding</keyword>
<protein>
    <recommendedName>
        <fullName evidence="2">Small ribosomal subunit protein uS12</fullName>
    </recommendedName>
    <alternativeName>
        <fullName evidence="4">30S ribosomal protein S12</fullName>
    </alternativeName>
</protein>
<accession>C4KZQ2</accession>
<sequence length="140" mass="15423">MPTINQLVRKGRKSKVVKSDSPALNKGYNSFIKSQTNVSSPQKRGVCTRVGTMTPKKPNSALRKYARVRLTNQIEVTAYIPGIGHNLQEHSVVLIRGGRVKDLPGVRYHIVRGALDTAGVDGRMQGRSKYGTKRPKAAKK</sequence>